<sequence length="97" mass="10543">MTDLRHYDVIVSPAITEKSTLVSENNQVVFNVAKQATKPEIKAAVEALFGVKVTAVNTLLRKGKTKRFRGFVGKQKDVKKAVVTLAEGQTIDVSTGL</sequence>
<evidence type="ECO:0000255" key="1">
    <source>
        <dbReference type="HAMAP-Rule" id="MF_01369"/>
    </source>
</evidence>
<evidence type="ECO:0000305" key="2"/>
<name>RL23_RHIJ3</name>
<keyword id="KW-0687">Ribonucleoprotein</keyword>
<keyword id="KW-0689">Ribosomal protein</keyword>
<keyword id="KW-0694">RNA-binding</keyword>
<keyword id="KW-0699">rRNA-binding</keyword>
<dbReference type="EMBL" id="AM236080">
    <property type="protein sequence ID" value="CAK07271.1"/>
    <property type="molecule type" value="Genomic_DNA"/>
</dbReference>
<dbReference type="RefSeq" id="WP_003547550.1">
    <property type="nucleotide sequence ID" value="NC_008380.1"/>
</dbReference>
<dbReference type="SMR" id="Q1MID9"/>
<dbReference type="EnsemblBacteria" id="CAK07271">
    <property type="protein sequence ID" value="CAK07271"/>
    <property type="gene ID" value="RL1776"/>
</dbReference>
<dbReference type="KEGG" id="rle:RL1776"/>
<dbReference type="eggNOG" id="COG0089">
    <property type="taxonomic scope" value="Bacteria"/>
</dbReference>
<dbReference type="HOGENOM" id="CLU_037562_3_1_5"/>
<dbReference type="Proteomes" id="UP000006575">
    <property type="component" value="Chromosome"/>
</dbReference>
<dbReference type="GO" id="GO:1990904">
    <property type="term" value="C:ribonucleoprotein complex"/>
    <property type="evidence" value="ECO:0007669"/>
    <property type="project" value="UniProtKB-KW"/>
</dbReference>
<dbReference type="GO" id="GO:0005840">
    <property type="term" value="C:ribosome"/>
    <property type="evidence" value="ECO:0007669"/>
    <property type="project" value="UniProtKB-KW"/>
</dbReference>
<dbReference type="GO" id="GO:0019843">
    <property type="term" value="F:rRNA binding"/>
    <property type="evidence" value="ECO:0007669"/>
    <property type="project" value="UniProtKB-UniRule"/>
</dbReference>
<dbReference type="GO" id="GO:0003735">
    <property type="term" value="F:structural constituent of ribosome"/>
    <property type="evidence" value="ECO:0007669"/>
    <property type="project" value="InterPro"/>
</dbReference>
<dbReference type="GO" id="GO:0006412">
    <property type="term" value="P:translation"/>
    <property type="evidence" value="ECO:0007669"/>
    <property type="project" value="UniProtKB-UniRule"/>
</dbReference>
<dbReference type="FunFam" id="3.30.70.330:FF:000001">
    <property type="entry name" value="50S ribosomal protein L23"/>
    <property type="match status" value="1"/>
</dbReference>
<dbReference type="Gene3D" id="3.30.70.330">
    <property type="match status" value="1"/>
</dbReference>
<dbReference type="HAMAP" id="MF_01369_B">
    <property type="entry name" value="Ribosomal_uL23_B"/>
    <property type="match status" value="1"/>
</dbReference>
<dbReference type="InterPro" id="IPR012677">
    <property type="entry name" value="Nucleotide-bd_a/b_plait_sf"/>
</dbReference>
<dbReference type="InterPro" id="IPR013025">
    <property type="entry name" value="Ribosomal_uL23-like"/>
</dbReference>
<dbReference type="InterPro" id="IPR012678">
    <property type="entry name" value="Ribosomal_uL23/eL15/eS24_sf"/>
</dbReference>
<dbReference type="NCBIfam" id="NF004359">
    <property type="entry name" value="PRK05738.1-3"/>
    <property type="match status" value="1"/>
</dbReference>
<dbReference type="NCBIfam" id="NF004360">
    <property type="entry name" value="PRK05738.1-5"/>
    <property type="match status" value="1"/>
</dbReference>
<dbReference type="NCBIfam" id="NF004363">
    <property type="entry name" value="PRK05738.2-4"/>
    <property type="match status" value="1"/>
</dbReference>
<dbReference type="PANTHER" id="PTHR11620">
    <property type="entry name" value="60S RIBOSOMAL PROTEIN L23A"/>
    <property type="match status" value="1"/>
</dbReference>
<dbReference type="Pfam" id="PF00276">
    <property type="entry name" value="Ribosomal_L23"/>
    <property type="match status" value="1"/>
</dbReference>
<dbReference type="SUPFAM" id="SSF54189">
    <property type="entry name" value="Ribosomal proteins S24e, L23 and L15e"/>
    <property type="match status" value="1"/>
</dbReference>
<protein>
    <recommendedName>
        <fullName evidence="1">Large ribosomal subunit protein uL23</fullName>
    </recommendedName>
    <alternativeName>
        <fullName evidence="2">50S ribosomal protein L23</fullName>
    </alternativeName>
</protein>
<accession>Q1MID9</accession>
<gene>
    <name evidence="1" type="primary">rplW</name>
    <name type="ordered locus">RL1776</name>
</gene>
<comment type="function">
    <text evidence="1">One of the early assembly proteins it binds 23S rRNA. One of the proteins that surrounds the polypeptide exit tunnel on the outside of the ribosome. Forms the main docking site for trigger factor binding to the ribosome.</text>
</comment>
<comment type="subunit">
    <text evidence="1">Part of the 50S ribosomal subunit. Contacts protein L29, and trigger factor when it is bound to the ribosome.</text>
</comment>
<comment type="similarity">
    <text evidence="1">Belongs to the universal ribosomal protein uL23 family.</text>
</comment>
<organism>
    <name type="scientific">Rhizobium johnstonii (strain DSM 114642 / LMG 32736 / 3841)</name>
    <name type="common">Rhizobium leguminosarum bv. viciae</name>
    <dbReference type="NCBI Taxonomy" id="216596"/>
    <lineage>
        <taxon>Bacteria</taxon>
        <taxon>Pseudomonadati</taxon>
        <taxon>Pseudomonadota</taxon>
        <taxon>Alphaproteobacteria</taxon>
        <taxon>Hyphomicrobiales</taxon>
        <taxon>Rhizobiaceae</taxon>
        <taxon>Rhizobium/Agrobacterium group</taxon>
        <taxon>Rhizobium</taxon>
        <taxon>Rhizobium johnstonii</taxon>
    </lineage>
</organism>
<reference key="1">
    <citation type="journal article" date="2006" name="Genome Biol.">
        <title>The genome of Rhizobium leguminosarum has recognizable core and accessory components.</title>
        <authorList>
            <person name="Young J.P.W."/>
            <person name="Crossman L.C."/>
            <person name="Johnston A.W.B."/>
            <person name="Thomson N.R."/>
            <person name="Ghazoui Z.F."/>
            <person name="Hull K.H."/>
            <person name="Wexler M."/>
            <person name="Curson A.R.J."/>
            <person name="Todd J.D."/>
            <person name="Poole P.S."/>
            <person name="Mauchline T.H."/>
            <person name="East A.K."/>
            <person name="Quail M.A."/>
            <person name="Churcher C."/>
            <person name="Arrowsmith C."/>
            <person name="Cherevach I."/>
            <person name="Chillingworth T."/>
            <person name="Clarke K."/>
            <person name="Cronin A."/>
            <person name="Davis P."/>
            <person name="Fraser A."/>
            <person name="Hance Z."/>
            <person name="Hauser H."/>
            <person name="Jagels K."/>
            <person name="Moule S."/>
            <person name="Mungall K."/>
            <person name="Norbertczak H."/>
            <person name="Rabbinowitsch E."/>
            <person name="Sanders M."/>
            <person name="Simmonds M."/>
            <person name="Whitehead S."/>
            <person name="Parkhill J."/>
        </authorList>
    </citation>
    <scope>NUCLEOTIDE SEQUENCE [LARGE SCALE GENOMIC DNA]</scope>
    <source>
        <strain>DSM 114642 / LMG 32736 / 3841</strain>
    </source>
</reference>
<feature type="chain" id="PRO_0000272818" description="Large ribosomal subunit protein uL23">
    <location>
        <begin position="1"/>
        <end position="97"/>
    </location>
</feature>
<proteinExistence type="inferred from homology"/>